<comment type="function">
    <text evidence="1">Protein transport. Probably involved in vesicular traffic (By similarity).</text>
</comment>
<comment type="subcellular location">
    <subcellularLocation>
        <location evidence="4">Cell membrane</location>
        <topology evidence="4">Lipid-anchor</topology>
        <orientation evidence="4">Cytoplasmic side</orientation>
    </subcellularLocation>
</comment>
<comment type="tissue specificity">
    <text>Virtually not expressed in leaves, higher in stems and roots, and highest in flowers.</text>
</comment>
<comment type="similarity">
    <text evidence="4">Belongs to the small GTPase superfamily. Rab family.</text>
</comment>
<feature type="chain" id="PRO_0000121278" description="Ras-related protein Rab5">
    <location>
        <begin position="1"/>
        <end position="200"/>
    </location>
</feature>
<feature type="short sequence motif" description="Effector region" evidence="3">
    <location>
        <begin position="39"/>
        <end position="47"/>
    </location>
</feature>
<feature type="binding site" evidence="2">
    <location>
        <begin position="17"/>
        <end position="25"/>
    </location>
    <ligand>
        <name>GTP</name>
        <dbReference type="ChEBI" id="CHEBI:37565"/>
    </ligand>
</feature>
<feature type="binding site" evidence="2">
    <location>
        <begin position="36"/>
        <end position="42"/>
    </location>
    <ligand>
        <name>GTP</name>
        <dbReference type="ChEBI" id="CHEBI:37565"/>
    </ligand>
</feature>
<feature type="binding site" evidence="2">
    <location>
        <begin position="65"/>
        <end position="69"/>
    </location>
    <ligand>
        <name>GTP</name>
        <dbReference type="ChEBI" id="CHEBI:37565"/>
    </ligand>
</feature>
<feature type="binding site" evidence="2">
    <location>
        <begin position="123"/>
        <end position="126"/>
    </location>
    <ligand>
        <name>GTP</name>
        <dbReference type="ChEBI" id="CHEBI:37565"/>
    </ligand>
</feature>
<feature type="binding site" evidence="2">
    <location>
        <begin position="153"/>
        <end position="155"/>
    </location>
    <ligand>
        <name>GTP</name>
        <dbReference type="ChEBI" id="CHEBI:37565"/>
    </ligand>
</feature>
<feature type="lipid moiety-binding region" description="S-geranylgeranyl cysteine" evidence="1">
    <location>
        <position position="198"/>
    </location>
</feature>
<feature type="lipid moiety-binding region" description="S-geranylgeranyl cysteine" evidence="1">
    <location>
        <position position="199"/>
    </location>
</feature>
<sequence>MASRRHNNLNAKLVLLGDMGAGKSSLVIRFVKGQFLEFQESTIGAAFFSSTVSVNNATVKFEIWDTAGQERYHSLAPMYYRGAAAAIIVYDITSTESLARAKKWVQELQKQGNPNMVMALAGNKADLEDKRKVTAEEARLYAEENGLFFMETSAKTATNVNDIFYEIAKRLPRAQPAQNPAGMVLEDKPAQGSQAASCCT</sequence>
<name>RAB5_TOBAC</name>
<proteinExistence type="evidence at transcript level"/>
<evidence type="ECO:0000250" key="1"/>
<evidence type="ECO:0000250" key="2">
    <source>
        <dbReference type="UniProtKB" id="P20339"/>
    </source>
</evidence>
<evidence type="ECO:0000255" key="3"/>
<evidence type="ECO:0000305" key="4"/>
<organism>
    <name type="scientific">Nicotiana tabacum</name>
    <name type="common">Common tobacco</name>
    <dbReference type="NCBI Taxonomy" id="4097"/>
    <lineage>
        <taxon>Eukaryota</taxon>
        <taxon>Viridiplantae</taxon>
        <taxon>Streptophyta</taxon>
        <taxon>Embryophyta</taxon>
        <taxon>Tracheophyta</taxon>
        <taxon>Spermatophyta</taxon>
        <taxon>Magnoliopsida</taxon>
        <taxon>eudicotyledons</taxon>
        <taxon>Gunneridae</taxon>
        <taxon>Pentapetalae</taxon>
        <taxon>asterids</taxon>
        <taxon>lamiids</taxon>
        <taxon>Solanales</taxon>
        <taxon>Solanaceae</taxon>
        <taxon>Nicotianoideae</taxon>
        <taxon>Nicotianeae</taxon>
        <taxon>Nicotiana</taxon>
    </lineage>
</organism>
<accession>P29687</accession>
<protein>
    <recommendedName>
        <fullName>Ras-related protein Rab5</fullName>
    </recommendedName>
</protein>
<gene>
    <name type="primary">RAB5</name>
</gene>
<reference key="1">
    <citation type="journal article" date="1992" name="Plant Mol. Biol.">
        <title>Molecular characterization of tobacco cDNAs encoding two small GTP-binding proteins.</title>
        <authorList>
            <person name="Dallmann G."/>
            <person name="Sticher L."/>
            <person name="Marshallsay C."/>
            <person name="Nagy F."/>
        </authorList>
    </citation>
    <scope>NUCLEOTIDE SEQUENCE [MRNA]</scope>
    <source>
        <strain>cv. SR1</strain>
        <tissue>Leaf</tissue>
    </source>
</reference>
<keyword id="KW-1003">Cell membrane</keyword>
<keyword id="KW-0342">GTP-binding</keyword>
<keyword id="KW-0449">Lipoprotein</keyword>
<keyword id="KW-0472">Membrane</keyword>
<keyword id="KW-0547">Nucleotide-binding</keyword>
<keyword id="KW-0636">Prenylation</keyword>
<keyword id="KW-0653">Protein transport</keyword>
<keyword id="KW-1185">Reference proteome</keyword>
<keyword id="KW-0813">Transport</keyword>
<dbReference type="EMBL" id="X63875">
    <property type="protein sequence ID" value="CAA45352.1"/>
    <property type="molecule type" value="mRNA"/>
</dbReference>
<dbReference type="PIR" id="S23524">
    <property type="entry name" value="S23524"/>
</dbReference>
<dbReference type="SMR" id="P29687"/>
<dbReference type="STRING" id="4097.P29687"/>
<dbReference type="PaxDb" id="4097-P29687"/>
<dbReference type="Proteomes" id="UP000084051">
    <property type="component" value="Unplaced"/>
</dbReference>
<dbReference type="GO" id="GO:0030139">
    <property type="term" value="C:endocytic vesicle"/>
    <property type="evidence" value="ECO:0000318"/>
    <property type="project" value="GO_Central"/>
</dbReference>
<dbReference type="GO" id="GO:0012505">
    <property type="term" value="C:endomembrane system"/>
    <property type="evidence" value="ECO:0000318"/>
    <property type="project" value="GO_Central"/>
</dbReference>
<dbReference type="GO" id="GO:0005768">
    <property type="term" value="C:endosome"/>
    <property type="evidence" value="ECO:0000318"/>
    <property type="project" value="GO_Central"/>
</dbReference>
<dbReference type="GO" id="GO:0005886">
    <property type="term" value="C:plasma membrane"/>
    <property type="evidence" value="ECO:0007669"/>
    <property type="project" value="UniProtKB-SubCell"/>
</dbReference>
<dbReference type="GO" id="GO:0005525">
    <property type="term" value="F:GTP binding"/>
    <property type="evidence" value="ECO:0007669"/>
    <property type="project" value="UniProtKB-KW"/>
</dbReference>
<dbReference type="GO" id="GO:0003924">
    <property type="term" value="F:GTPase activity"/>
    <property type="evidence" value="ECO:0000318"/>
    <property type="project" value="GO_Central"/>
</dbReference>
<dbReference type="GO" id="GO:0006886">
    <property type="term" value="P:intracellular protein transport"/>
    <property type="evidence" value="ECO:0000318"/>
    <property type="project" value="GO_Central"/>
</dbReference>
<dbReference type="CDD" id="cd01860">
    <property type="entry name" value="Rab5_related"/>
    <property type="match status" value="1"/>
</dbReference>
<dbReference type="FunFam" id="3.40.50.300:FF:000687">
    <property type="entry name" value="Ras-related protein RABF2b"/>
    <property type="match status" value="1"/>
</dbReference>
<dbReference type="Gene3D" id="3.40.50.300">
    <property type="entry name" value="P-loop containing nucleotide triphosphate hydrolases"/>
    <property type="match status" value="1"/>
</dbReference>
<dbReference type="InterPro" id="IPR027417">
    <property type="entry name" value="P-loop_NTPase"/>
</dbReference>
<dbReference type="InterPro" id="IPR005225">
    <property type="entry name" value="Small_GTP-bd"/>
</dbReference>
<dbReference type="InterPro" id="IPR001806">
    <property type="entry name" value="Small_GTPase"/>
</dbReference>
<dbReference type="NCBIfam" id="TIGR00231">
    <property type="entry name" value="small_GTP"/>
    <property type="match status" value="1"/>
</dbReference>
<dbReference type="PANTHER" id="PTHR47978">
    <property type="match status" value="1"/>
</dbReference>
<dbReference type="Pfam" id="PF00071">
    <property type="entry name" value="Ras"/>
    <property type="match status" value="1"/>
</dbReference>
<dbReference type="PRINTS" id="PR00449">
    <property type="entry name" value="RASTRNSFRMNG"/>
</dbReference>
<dbReference type="SMART" id="SM00175">
    <property type="entry name" value="RAB"/>
    <property type="match status" value="1"/>
</dbReference>
<dbReference type="SMART" id="SM00176">
    <property type="entry name" value="RAN"/>
    <property type="match status" value="1"/>
</dbReference>
<dbReference type="SMART" id="SM00173">
    <property type="entry name" value="RAS"/>
    <property type="match status" value="1"/>
</dbReference>
<dbReference type="SMART" id="SM00174">
    <property type="entry name" value="RHO"/>
    <property type="match status" value="1"/>
</dbReference>
<dbReference type="SUPFAM" id="SSF52540">
    <property type="entry name" value="P-loop containing nucleoside triphosphate hydrolases"/>
    <property type="match status" value="1"/>
</dbReference>
<dbReference type="PROSITE" id="PS51419">
    <property type="entry name" value="RAB"/>
    <property type="match status" value="1"/>
</dbReference>